<comment type="function">
    <text evidence="2">Member of the two-component regulatory system WalK/WalR. WalK functions as a sensor protein kinase which is autophosphorylated at a histidine residue and transfers its phosphate group to WalR.</text>
</comment>
<comment type="catalytic activity">
    <reaction evidence="1">
        <text>ATP + protein L-histidine = ADP + protein N-phospho-L-histidine.</text>
        <dbReference type="EC" id="2.7.13.3"/>
    </reaction>
</comment>
<comment type="subcellular location">
    <subcellularLocation>
        <location evidence="8">Cell membrane</location>
        <topology evidence="3">Multi-pass membrane protein</topology>
    </subcellularLocation>
</comment>
<comment type="PTM">
    <text evidence="2">Autophosphorylated.</text>
</comment>
<gene>
    <name type="primary">walK</name>
    <name type="ordered locus">SSP0022</name>
</gene>
<organism>
    <name type="scientific">Staphylococcus saprophyticus subsp. saprophyticus (strain ATCC 15305 / DSM 20229 / NCIMB 8711 / NCTC 7292 / S-41)</name>
    <dbReference type="NCBI Taxonomy" id="342451"/>
    <lineage>
        <taxon>Bacteria</taxon>
        <taxon>Bacillati</taxon>
        <taxon>Bacillota</taxon>
        <taxon>Bacilli</taxon>
        <taxon>Bacillales</taxon>
        <taxon>Staphylococcaceae</taxon>
        <taxon>Staphylococcus</taxon>
    </lineage>
</organism>
<sequence>MKWLKHFQSLHTKLVIVYVLLIIIGMQIIGLYFTNSLEKELTQTFKNNISQYAKQIEINIEKVYDEDNAINAQKEVQNLLNEYANRQEIEEIRFIDKDQIIMATSKQSTRSLINQKANDNSIQKALSLGEINSHTVLKDYGNGKQRVWVYNLPVKTSNDGTIGDVYIEADINDVYNQLSNINQIFIVGTGISLLITVILGFFIARTITKPITDMRNQTVEMSKGNYTQRVKIYGNDEIGELALAFNNLSKRVQEAQANTESEKRRLDSVITHMSDGIIATDRRGRVRIVNDMALTMMGTMKEDIIGDHMLKVLKLEEDFSLDEIQENNDSFLLDINENEGIIARVNFSTIVQETGFVTGYIAVLHDVTEQQQVERERREFVANVSHELRTPLTSMNSYIEALESGAWKDGELAPQFLSVTREETERMIRLVNDLLQLSKMDNESEQITKEIVDFNMFINKIINRHEMSAKDTTFVREVPTETIFTEIDPDKMTQVFDNVITNAMKYSRGDKRVEFHVKQNALYNRMTIRVKDNGIGIPINKVDKIFDRFYRVDKARTRKMGGTGLGLAISKEIVEAHNGRIWANSVEGQGTSIFITLPCEVLEDGDWDAE</sequence>
<feature type="chain" id="PRO_0000353068" description="Sensor protein kinase WalK">
    <location>
        <begin position="1"/>
        <end position="610"/>
    </location>
</feature>
<feature type="transmembrane region" description="Helical" evidence="3">
    <location>
        <begin position="14"/>
        <end position="34"/>
    </location>
</feature>
<feature type="transmembrane region" description="Helical" evidence="3">
    <location>
        <begin position="184"/>
        <end position="204"/>
    </location>
</feature>
<feature type="domain" description="HAMP" evidence="4">
    <location>
        <begin position="205"/>
        <end position="257"/>
    </location>
</feature>
<feature type="domain" description="PAS" evidence="6">
    <location>
        <begin position="262"/>
        <end position="333"/>
    </location>
</feature>
<feature type="domain" description="PAC" evidence="7">
    <location>
        <begin position="326"/>
        <end position="379"/>
    </location>
</feature>
<feature type="domain" description="Histidine kinase" evidence="5">
    <location>
        <begin position="383"/>
        <end position="601"/>
    </location>
</feature>
<feature type="modified residue" description="Phosphohistidine; by autocatalysis" evidence="5">
    <location>
        <position position="386"/>
    </location>
</feature>
<keyword id="KW-0067">ATP-binding</keyword>
<keyword id="KW-1003">Cell membrane</keyword>
<keyword id="KW-0418">Kinase</keyword>
<keyword id="KW-0472">Membrane</keyword>
<keyword id="KW-0547">Nucleotide-binding</keyword>
<keyword id="KW-0597">Phosphoprotein</keyword>
<keyword id="KW-1185">Reference proteome</keyword>
<keyword id="KW-0808">Transferase</keyword>
<keyword id="KW-0812">Transmembrane</keyword>
<keyword id="KW-1133">Transmembrane helix</keyword>
<keyword id="KW-0902">Two-component regulatory system</keyword>
<reference key="1">
    <citation type="journal article" date="2005" name="Proc. Natl. Acad. Sci. U.S.A.">
        <title>Whole genome sequence of Staphylococcus saprophyticus reveals the pathogenesis of uncomplicated urinary tract infection.</title>
        <authorList>
            <person name="Kuroda M."/>
            <person name="Yamashita A."/>
            <person name="Hirakawa H."/>
            <person name="Kumano M."/>
            <person name="Morikawa K."/>
            <person name="Higashide M."/>
            <person name="Maruyama A."/>
            <person name="Inose Y."/>
            <person name="Matoba K."/>
            <person name="Toh H."/>
            <person name="Kuhara S."/>
            <person name="Hattori M."/>
            <person name="Ohta T."/>
        </authorList>
    </citation>
    <scope>NUCLEOTIDE SEQUENCE [LARGE SCALE GENOMIC DNA]</scope>
    <source>
        <strain>ATCC 15305 / DSM 20229 / NCIMB 8711 / NCTC 7292 / S-41</strain>
    </source>
</reference>
<name>WALK_STAS1</name>
<accession>Q4A159</accession>
<protein>
    <recommendedName>
        <fullName evidence="8">Sensor protein kinase WalK</fullName>
        <ecNumber evidence="1">2.7.13.3</ecNumber>
    </recommendedName>
</protein>
<evidence type="ECO:0000250" key="1">
    <source>
        <dbReference type="UniProtKB" id="O34206"/>
    </source>
</evidence>
<evidence type="ECO:0000250" key="2">
    <source>
        <dbReference type="UniProtKB" id="Q2G2U4"/>
    </source>
</evidence>
<evidence type="ECO:0000255" key="3"/>
<evidence type="ECO:0000255" key="4">
    <source>
        <dbReference type="PROSITE-ProRule" id="PRU00102"/>
    </source>
</evidence>
<evidence type="ECO:0000255" key="5">
    <source>
        <dbReference type="PROSITE-ProRule" id="PRU00107"/>
    </source>
</evidence>
<evidence type="ECO:0000255" key="6">
    <source>
        <dbReference type="PROSITE-ProRule" id="PRU00140"/>
    </source>
</evidence>
<evidence type="ECO:0000255" key="7">
    <source>
        <dbReference type="PROSITE-ProRule" id="PRU00141"/>
    </source>
</evidence>
<evidence type="ECO:0000305" key="8"/>
<dbReference type="EC" id="2.7.13.3" evidence="1"/>
<dbReference type="EMBL" id="AP008934">
    <property type="protein sequence ID" value="BAE17167.1"/>
    <property type="molecule type" value="Genomic_DNA"/>
</dbReference>
<dbReference type="RefSeq" id="WP_011302026.1">
    <property type="nucleotide sequence ID" value="NZ_MTGA01000035.1"/>
</dbReference>
<dbReference type="SMR" id="Q4A159"/>
<dbReference type="GeneID" id="3615248"/>
<dbReference type="KEGG" id="ssp:SSP0022"/>
<dbReference type="PATRIC" id="fig|342451.11.peg.23"/>
<dbReference type="eggNOG" id="COG5002">
    <property type="taxonomic scope" value="Bacteria"/>
</dbReference>
<dbReference type="HOGENOM" id="CLU_000445_89_2_9"/>
<dbReference type="OrthoDB" id="9813151at2"/>
<dbReference type="Proteomes" id="UP000006371">
    <property type="component" value="Chromosome"/>
</dbReference>
<dbReference type="GO" id="GO:0005886">
    <property type="term" value="C:plasma membrane"/>
    <property type="evidence" value="ECO:0007669"/>
    <property type="project" value="UniProtKB-SubCell"/>
</dbReference>
<dbReference type="GO" id="GO:0005524">
    <property type="term" value="F:ATP binding"/>
    <property type="evidence" value="ECO:0007669"/>
    <property type="project" value="UniProtKB-KW"/>
</dbReference>
<dbReference type="GO" id="GO:0000156">
    <property type="term" value="F:phosphorelay response regulator activity"/>
    <property type="evidence" value="ECO:0007669"/>
    <property type="project" value="TreeGrafter"/>
</dbReference>
<dbReference type="GO" id="GO:0000155">
    <property type="term" value="F:phosphorelay sensor kinase activity"/>
    <property type="evidence" value="ECO:0007669"/>
    <property type="project" value="InterPro"/>
</dbReference>
<dbReference type="GO" id="GO:0030295">
    <property type="term" value="F:protein kinase activator activity"/>
    <property type="evidence" value="ECO:0007669"/>
    <property type="project" value="TreeGrafter"/>
</dbReference>
<dbReference type="GO" id="GO:0007234">
    <property type="term" value="P:osmosensory signaling via phosphorelay pathway"/>
    <property type="evidence" value="ECO:0007669"/>
    <property type="project" value="TreeGrafter"/>
</dbReference>
<dbReference type="CDD" id="cd06225">
    <property type="entry name" value="HAMP"/>
    <property type="match status" value="1"/>
</dbReference>
<dbReference type="CDD" id="cd00075">
    <property type="entry name" value="HATPase"/>
    <property type="match status" value="1"/>
</dbReference>
<dbReference type="CDD" id="cd00082">
    <property type="entry name" value="HisKA"/>
    <property type="match status" value="1"/>
</dbReference>
<dbReference type="CDD" id="cd00130">
    <property type="entry name" value="PAS"/>
    <property type="match status" value="1"/>
</dbReference>
<dbReference type="FunFam" id="1.10.8.500:FF:000001">
    <property type="entry name" value="Cell wall metabolism sensor histidine kinase"/>
    <property type="match status" value="1"/>
</dbReference>
<dbReference type="FunFam" id="3.30.565.10:FF:000006">
    <property type="entry name" value="Sensor histidine kinase WalK"/>
    <property type="match status" value="1"/>
</dbReference>
<dbReference type="FunFam" id="1.10.287.130:FF:000001">
    <property type="entry name" value="Two-component sensor histidine kinase"/>
    <property type="match status" value="1"/>
</dbReference>
<dbReference type="Gene3D" id="1.10.287.130">
    <property type="match status" value="1"/>
</dbReference>
<dbReference type="Gene3D" id="1.10.8.500">
    <property type="entry name" value="HAMP domain in histidine kinase"/>
    <property type="match status" value="1"/>
</dbReference>
<dbReference type="Gene3D" id="3.30.565.10">
    <property type="entry name" value="Histidine kinase-like ATPase, C-terminal domain"/>
    <property type="match status" value="1"/>
</dbReference>
<dbReference type="Gene3D" id="3.30.450.20">
    <property type="entry name" value="PAS domain"/>
    <property type="match status" value="2"/>
</dbReference>
<dbReference type="InterPro" id="IPR003660">
    <property type="entry name" value="HAMP_dom"/>
</dbReference>
<dbReference type="InterPro" id="IPR036890">
    <property type="entry name" value="HATPase_C_sf"/>
</dbReference>
<dbReference type="InterPro" id="IPR005467">
    <property type="entry name" value="His_kinase_dom"/>
</dbReference>
<dbReference type="InterPro" id="IPR003661">
    <property type="entry name" value="HisK_dim/P_dom"/>
</dbReference>
<dbReference type="InterPro" id="IPR036097">
    <property type="entry name" value="HisK_dim/P_sf"/>
</dbReference>
<dbReference type="InterPro" id="IPR052545">
    <property type="entry name" value="Light-responsive_reg"/>
</dbReference>
<dbReference type="InterPro" id="IPR000014">
    <property type="entry name" value="PAS"/>
</dbReference>
<dbReference type="InterPro" id="IPR000700">
    <property type="entry name" value="PAS-assoc_C"/>
</dbReference>
<dbReference type="InterPro" id="IPR035965">
    <property type="entry name" value="PAS-like_dom_sf"/>
</dbReference>
<dbReference type="InterPro" id="IPR049814">
    <property type="entry name" value="Resp_reg_WalK"/>
</dbReference>
<dbReference type="InterPro" id="IPR029151">
    <property type="entry name" value="Sensor-like_sf"/>
</dbReference>
<dbReference type="InterPro" id="IPR004358">
    <property type="entry name" value="Sig_transdc_His_kin-like_C"/>
</dbReference>
<dbReference type="NCBIfam" id="NF033092">
    <property type="entry name" value="HK_WalK"/>
    <property type="match status" value="1"/>
</dbReference>
<dbReference type="NCBIfam" id="TIGR00229">
    <property type="entry name" value="sensory_box"/>
    <property type="match status" value="1"/>
</dbReference>
<dbReference type="PANTHER" id="PTHR42878:SF7">
    <property type="entry name" value="SENSOR HISTIDINE KINASE GLRK"/>
    <property type="match status" value="1"/>
</dbReference>
<dbReference type="PANTHER" id="PTHR42878">
    <property type="entry name" value="TWO-COMPONENT HISTIDINE KINASE"/>
    <property type="match status" value="1"/>
</dbReference>
<dbReference type="Pfam" id="PF23846">
    <property type="entry name" value="Cache_WalK"/>
    <property type="match status" value="1"/>
</dbReference>
<dbReference type="Pfam" id="PF00672">
    <property type="entry name" value="HAMP"/>
    <property type="match status" value="1"/>
</dbReference>
<dbReference type="Pfam" id="PF02518">
    <property type="entry name" value="HATPase_c"/>
    <property type="match status" value="1"/>
</dbReference>
<dbReference type="Pfam" id="PF00512">
    <property type="entry name" value="HisKA"/>
    <property type="match status" value="1"/>
</dbReference>
<dbReference type="Pfam" id="PF13426">
    <property type="entry name" value="PAS_9"/>
    <property type="match status" value="1"/>
</dbReference>
<dbReference type="PRINTS" id="PR00344">
    <property type="entry name" value="BCTRLSENSOR"/>
</dbReference>
<dbReference type="SMART" id="SM00304">
    <property type="entry name" value="HAMP"/>
    <property type="match status" value="1"/>
</dbReference>
<dbReference type="SMART" id="SM00387">
    <property type="entry name" value="HATPase_c"/>
    <property type="match status" value="1"/>
</dbReference>
<dbReference type="SMART" id="SM00388">
    <property type="entry name" value="HisKA"/>
    <property type="match status" value="1"/>
</dbReference>
<dbReference type="SMART" id="SM00091">
    <property type="entry name" value="PAS"/>
    <property type="match status" value="1"/>
</dbReference>
<dbReference type="SUPFAM" id="SSF55874">
    <property type="entry name" value="ATPase domain of HSP90 chaperone/DNA topoisomerase II/histidine kinase"/>
    <property type="match status" value="1"/>
</dbReference>
<dbReference type="SUPFAM" id="SSF158472">
    <property type="entry name" value="HAMP domain-like"/>
    <property type="match status" value="1"/>
</dbReference>
<dbReference type="SUPFAM" id="SSF47384">
    <property type="entry name" value="Homodimeric domain of signal transducing histidine kinase"/>
    <property type="match status" value="1"/>
</dbReference>
<dbReference type="SUPFAM" id="SSF55785">
    <property type="entry name" value="PYP-like sensor domain (PAS domain)"/>
    <property type="match status" value="1"/>
</dbReference>
<dbReference type="SUPFAM" id="SSF103190">
    <property type="entry name" value="Sensory domain-like"/>
    <property type="match status" value="1"/>
</dbReference>
<dbReference type="PROSITE" id="PS50885">
    <property type="entry name" value="HAMP"/>
    <property type="match status" value="1"/>
</dbReference>
<dbReference type="PROSITE" id="PS50109">
    <property type="entry name" value="HIS_KIN"/>
    <property type="match status" value="1"/>
</dbReference>
<dbReference type="PROSITE" id="PS50113">
    <property type="entry name" value="PAC"/>
    <property type="match status" value="1"/>
</dbReference>
<dbReference type="PROSITE" id="PS50112">
    <property type="entry name" value="PAS"/>
    <property type="match status" value="1"/>
</dbReference>
<proteinExistence type="inferred from homology"/>